<gene>
    <name evidence="1" type="primary">argJ</name>
    <name type="ordered locus">SYNW2353</name>
</gene>
<proteinExistence type="inferred from homology"/>
<organism>
    <name type="scientific">Parasynechococcus marenigrum (strain WH8102)</name>
    <dbReference type="NCBI Taxonomy" id="84588"/>
    <lineage>
        <taxon>Bacteria</taxon>
        <taxon>Bacillati</taxon>
        <taxon>Cyanobacteriota</taxon>
        <taxon>Cyanophyceae</taxon>
        <taxon>Synechococcales</taxon>
        <taxon>Prochlorococcaceae</taxon>
        <taxon>Parasynechococcus</taxon>
        <taxon>Parasynechococcus marenigrum</taxon>
    </lineage>
</organism>
<reference key="1">
    <citation type="journal article" date="2003" name="Nature">
        <title>The genome of a motile marine Synechococcus.</title>
        <authorList>
            <person name="Palenik B."/>
            <person name="Brahamsha B."/>
            <person name="Larimer F.W."/>
            <person name="Land M.L."/>
            <person name="Hauser L."/>
            <person name="Chain P."/>
            <person name="Lamerdin J.E."/>
            <person name="Regala W."/>
            <person name="Allen E.E."/>
            <person name="McCarren J."/>
            <person name="Paulsen I.T."/>
            <person name="Dufresne A."/>
            <person name="Partensky F."/>
            <person name="Webb E.A."/>
            <person name="Waterbury J."/>
        </authorList>
    </citation>
    <scope>NUCLEOTIDE SEQUENCE [LARGE SCALE GENOMIC DNA]</scope>
    <source>
        <strain>WH8102</strain>
    </source>
</reference>
<comment type="function">
    <text evidence="1">Catalyzes two activities which are involved in the cyclic version of arginine biosynthesis: the synthesis of N-acetylglutamate from glutamate and acetyl-CoA as the acetyl donor, and of ornithine by transacetylation between N(2)-acetylornithine and glutamate.</text>
</comment>
<comment type="catalytic activity">
    <reaction evidence="1">
        <text>N(2)-acetyl-L-ornithine + L-glutamate = N-acetyl-L-glutamate + L-ornithine</text>
        <dbReference type="Rhea" id="RHEA:15349"/>
        <dbReference type="ChEBI" id="CHEBI:29985"/>
        <dbReference type="ChEBI" id="CHEBI:44337"/>
        <dbReference type="ChEBI" id="CHEBI:46911"/>
        <dbReference type="ChEBI" id="CHEBI:57805"/>
        <dbReference type="EC" id="2.3.1.35"/>
    </reaction>
</comment>
<comment type="catalytic activity">
    <reaction evidence="1">
        <text>L-glutamate + acetyl-CoA = N-acetyl-L-glutamate + CoA + H(+)</text>
        <dbReference type="Rhea" id="RHEA:24292"/>
        <dbReference type="ChEBI" id="CHEBI:15378"/>
        <dbReference type="ChEBI" id="CHEBI:29985"/>
        <dbReference type="ChEBI" id="CHEBI:44337"/>
        <dbReference type="ChEBI" id="CHEBI:57287"/>
        <dbReference type="ChEBI" id="CHEBI:57288"/>
        <dbReference type="EC" id="2.3.1.1"/>
    </reaction>
</comment>
<comment type="pathway">
    <text evidence="1">Amino-acid biosynthesis; L-arginine biosynthesis; L-ornithine and N-acetyl-L-glutamate from L-glutamate and N(2)-acetyl-L-ornithine (cyclic): step 1/1.</text>
</comment>
<comment type="pathway">
    <text evidence="1">Amino-acid biosynthesis; L-arginine biosynthesis; N(2)-acetyl-L-ornithine from L-glutamate: step 1/4.</text>
</comment>
<comment type="subunit">
    <text evidence="1">Heterotetramer of two alpha and two beta chains.</text>
</comment>
<comment type="subcellular location">
    <subcellularLocation>
        <location evidence="1">Cytoplasm</location>
    </subcellularLocation>
</comment>
<comment type="similarity">
    <text evidence="1">Belongs to the ArgJ family.</text>
</comment>
<keyword id="KW-0012">Acyltransferase</keyword>
<keyword id="KW-0028">Amino-acid biosynthesis</keyword>
<keyword id="KW-0055">Arginine biosynthesis</keyword>
<keyword id="KW-0068">Autocatalytic cleavage</keyword>
<keyword id="KW-0963">Cytoplasm</keyword>
<keyword id="KW-0511">Multifunctional enzyme</keyword>
<keyword id="KW-0808">Transferase</keyword>
<name>ARGJ_PARMW</name>
<sequence>MVPVSLGCAMQSPWQLVSGGVTSPQGFQASGIAAGLKPSGKLDMALLLAPEQAVCAGSFTTSVVRAACVDLCAERLAANGGQARAVLINSGQANACTGDRGLIDSQRATQALADQLGLDAEALLICSTGVIGVPIPMPKLLAGLDPLVAALSATGGEAAATAILTTDLVSKQVALEAELGGRRVRIGGIAKGSGMIHPDMATMLGFFSCDAGLDPSIWKAMVGQAVQRSFNAITVDGDTSTNDTVLAFAAGDPLDSVHHAALEQGLTEAMQHLAKAIARDGEGATCLIEVQVEGALDEPSAQRVARTIVGSSLVKTAVHGRDPNWGRIVAAAGRSGVPFDPEQVALWIGPHQLMQSGQPLSFDPEAASRVLRSETVQIRIQLGDGPGNGLAWGCDLSDQYVRINADYTT</sequence>
<dbReference type="EC" id="2.3.1.35" evidence="1"/>
<dbReference type="EC" id="2.3.1.1" evidence="1"/>
<dbReference type="EMBL" id="BX569695">
    <property type="protein sequence ID" value="CAE08868.1"/>
    <property type="molecule type" value="Genomic_DNA"/>
</dbReference>
<dbReference type="SMR" id="Q7U3S6"/>
<dbReference type="STRING" id="84588.SYNW2353"/>
<dbReference type="MEROPS" id="T05.002"/>
<dbReference type="KEGG" id="syw:SYNW2353"/>
<dbReference type="eggNOG" id="COG1364">
    <property type="taxonomic scope" value="Bacteria"/>
</dbReference>
<dbReference type="HOGENOM" id="CLU_027172_1_0_3"/>
<dbReference type="UniPathway" id="UPA00068">
    <property type="reaction ID" value="UER00106"/>
</dbReference>
<dbReference type="UniPathway" id="UPA00068">
    <property type="reaction ID" value="UER00111"/>
</dbReference>
<dbReference type="Proteomes" id="UP000001422">
    <property type="component" value="Chromosome"/>
</dbReference>
<dbReference type="GO" id="GO:0005737">
    <property type="term" value="C:cytoplasm"/>
    <property type="evidence" value="ECO:0007669"/>
    <property type="project" value="UniProtKB-SubCell"/>
</dbReference>
<dbReference type="GO" id="GO:0004358">
    <property type="term" value="F:glutamate N-acetyltransferase activity"/>
    <property type="evidence" value="ECO:0007669"/>
    <property type="project" value="UniProtKB-UniRule"/>
</dbReference>
<dbReference type="GO" id="GO:0004042">
    <property type="term" value="F:L-glutamate N-acetyltransferase activity"/>
    <property type="evidence" value="ECO:0007669"/>
    <property type="project" value="UniProtKB-UniRule"/>
</dbReference>
<dbReference type="GO" id="GO:0006526">
    <property type="term" value="P:L-arginine biosynthetic process"/>
    <property type="evidence" value="ECO:0007669"/>
    <property type="project" value="UniProtKB-UniRule"/>
</dbReference>
<dbReference type="GO" id="GO:0006592">
    <property type="term" value="P:ornithine biosynthetic process"/>
    <property type="evidence" value="ECO:0007669"/>
    <property type="project" value="TreeGrafter"/>
</dbReference>
<dbReference type="CDD" id="cd02152">
    <property type="entry name" value="OAT"/>
    <property type="match status" value="1"/>
</dbReference>
<dbReference type="FunFam" id="3.10.20.340:FF:000001">
    <property type="entry name" value="Arginine biosynthesis bifunctional protein ArgJ, chloroplastic"/>
    <property type="match status" value="1"/>
</dbReference>
<dbReference type="FunFam" id="3.60.70.12:FF:000001">
    <property type="entry name" value="Arginine biosynthesis bifunctional protein ArgJ, chloroplastic"/>
    <property type="match status" value="1"/>
</dbReference>
<dbReference type="Gene3D" id="3.10.20.340">
    <property type="entry name" value="ArgJ beta chain, C-terminal domain"/>
    <property type="match status" value="1"/>
</dbReference>
<dbReference type="Gene3D" id="3.60.70.12">
    <property type="entry name" value="L-amino peptidase D-ALA esterase/amidase"/>
    <property type="match status" value="1"/>
</dbReference>
<dbReference type="HAMAP" id="MF_01106">
    <property type="entry name" value="ArgJ"/>
    <property type="match status" value="1"/>
</dbReference>
<dbReference type="InterPro" id="IPR002813">
    <property type="entry name" value="Arg_biosynth_ArgJ"/>
</dbReference>
<dbReference type="InterPro" id="IPR016117">
    <property type="entry name" value="ArgJ-like_dom_sf"/>
</dbReference>
<dbReference type="InterPro" id="IPR042195">
    <property type="entry name" value="ArgJ_beta_C"/>
</dbReference>
<dbReference type="NCBIfam" id="TIGR00120">
    <property type="entry name" value="ArgJ"/>
    <property type="match status" value="1"/>
</dbReference>
<dbReference type="NCBIfam" id="NF003802">
    <property type="entry name" value="PRK05388.1"/>
    <property type="match status" value="1"/>
</dbReference>
<dbReference type="PANTHER" id="PTHR23100">
    <property type="entry name" value="ARGININE BIOSYNTHESIS BIFUNCTIONAL PROTEIN ARGJ"/>
    <property type="match status" value="1"/>
</dbReference>
<dbReference type="PANTHER" id="PTHR23100:SF0">
    <property type="entry name" value="ARGININE BIOSYNTHESIS BIFUNCTIONAL PROTEIN ARGJ, MITOCHONDRIAL"/>
    <property type="match status" value="1"/>
</dbReference>
<dbReference type="Pfam" id="PF01960">
    <property type="entry name" value="ArgJ"/>
    <property type="match status" value="1"/>
</dbReference>
<dbReference type="SUPFAM" id="SSF56266">
    <property type="entry name" value="DmpA/ArgJ-like"/>
    <property type="match status" value="1"/>
</dbReference>
<protein>
    <recommendedName>
        <fullName evidence="1">Arginine biosynthesis bifunctional protein ArgJ</fullName>
    </recommendedName>
    <domain>
        <recommendedName>
            <fullName evidence="1">Glutamate N-acetyltransferase</fullName>
            <ecNumber evidence="1">2.3.1.35</ecNumber>
        </recommendedName>
        <alternativeName>
            <fullName evidence="1">Ornithine acetyltransferase</fullName>
            <shortName evidence="1">OATase</shortName>
        </alternativeName>
        <alternativeName>
            <fullName evidence="1">Ornithine transacetylase</fullName>
        </alternativeName>
    </domain>
    <domain>
        <recommendedName>
            <fullName evidence="1">Amino-acid acetyltransferase</fullName>
            <ecNumber evidence="1">2.3.1.1</ecNumber>
        </recommendedName>
        <alternativeName>
            <fullName evidence="1">N-acetylglutamate synthase</fullName>
            <shortName evidence="1">AGSase</shortName>
        </alternativeName>
    </domain>
    <component>
        <recommendedName>
            <fullName evidence="1">Arginine biosynthesis bifunctional protein ArgJ alpha chain</fullName>
        </recommendedName>
    </component>
    <component>
        <recommendedName>
            <fullName evidence="1">Arginine biosynthesis bifunctional protein ArgJ beta chain</fullName>
        </recommendedName>
    </component>
</protein>
<feature type="chain" id="PRO_0000002253" description="Arginine biosynthesis bifunctional protein ArgJ alpha chain" evidence="1">
    <location>
        <begin position="1"/>
        <end position="201"/>
    </location>
</feature>
<feature type="chain" id="PRO_0000002254" description="Arginine biosynthesis bifunctional protein ArgJ beta chain" evidence="1">
    <location>
        <begin position="202"/>
        <end position="409"/>
    </location>
</feature>
<feature type="active site" description="Nucleophile" evidence="1">
    <location>
        <position position="202"/>
    </location>
</feature>
<feature type="binding site" evidence="1">
    <location>
        <position position="165"/>
    </location>
    <ligand>
        <name>substrate</name>
    </ligand>
</feature>
<feature type="binding site" evidence="1">
    <location>
        <position position="191"/>
    </location>
    <ligand>
        <name>substrate</name>
    </ligand>
</feature>
<feature type="binding site" evidence="1">
    <location>
        <position position="202"/>
    </location>
    <ligand>
        <name>substrate</name>
    </ligand>
</feature>
<feature type="binding site" evidence="1">
    <location>
        <position position="282"/>
    </location>
    <ligand>
        <name>substrate</name>
    </ligand>
</feature>
<feature type="binding site" evidence="1">
    <location>
        <position position="404"/>
    </location>
    <ligand>
        <name>substrate</name>
    </ligand>
</feature>
<feature type="binding site" evidence="1">
    <location>
        <position position="409"/>
    </location>
    <ligand>
        <name>substrate</name>
    </ligand>
</feature>
<feature type="site" description="Involved in the stabilization of negative charge on the oxyanion by the formation of the oxyanion hole" evidence="1">
    <location>
        <position position="128"/>
    </location>
</feature>
<feature type="site" description="Involved in the stabilization of negative charge on the oxyanion by the formation of the oxyanion hole" evidence="1">
    <location>
        <position position="129"/>
    </location>
</feature>
<feature type="site" description="Cleavage; by autolysis" evidence="1">
    <location>
        <begin position="201"/>
        <end position="202"/>
    </location>
</feature>
<evidence type="ECO:0000255" key="1">
    <source>
        <dbReference type="HAMAP-Rule" id="MF_01106"/>
    </source>
</evidence>
<accession>Q7U3S6</accession>